<accession>Q57TG8</accession>
<feature type="signal peptide" evidence="1">
    <location>
        <begin position="1"/>
        <end position="20"/>
    </location>
</feature>
<feature type="chain" id="PRO_0000270034" description="Chaperone SurA">
    <location>
        <begin position="21"/>
        <end position="428"/>
    </location>
</feature>
<feature type="domain" description="PpiC 1" evidence="1">
    <location>
        <begin position="171"/>
        <end position="272"/>
    </location>
</feature>
<feature type="domain" description="PpiC 2" evidence="1">
    <location>
        <begin position="282"/>
        <end position="382"/>
    </location>
</feature>
<proteinExistence type="inferred from homology"/>
<reference key="1">
    <citation type="journal article" date="2005" name="Nucleic Acids Res.">
        <title>The genome sequence of Salmonella enterica serovar Choleraesuis, a highly invasive and resistant zoonotic pathogen.</title>
        <authorList>
            <person name="Chiu C.-H."/>
            <person name="Tang P."/>
            <person name="Chu C."/>
            <person name="Hu S."/>
            <person name="Bao Q."/>
            <person name="Yu J."/>
            <person name="Chou Y.-Y."/>
            <person name="Wang H.-S."/>
            <person name="Lee Y.-S."/>
        </authorList>
    </citation>
    <scope>NUCLEOTIDE SEQUENCE [LARGE SCALE GENOMIC DNA]</scope>
    <source>
        <strain>SC-B67</strain>
    </source>
</reference>
<comment type="function">
    <text evidence="1">Chaperone involved in the correct folding and assembly of outer membrane proteins. Recognizes specific patterns of aromatic residues and the orientation of their side chains, which are found more frequently in integral outer membrane proteins. May act in both early periplasmic and late outer membrane-associated steps of protein maturation.</text>
</comment>
<comment type="catalytic activity">
    <reaction evidence="1">
        <text>[protein]-peptidylproline (omega=180) = [protein]-peptidylproline (omega=0)</text>
        <dbReference type="Rhea" id="RHEA:16237"/>
        <dbReference type="Rhea" id="RHEA-COMP:10747"/>
        <dbReference type="Rhea" id="RHEA-COMP:10748"/>
        <dbReference type="ChEBI" id="CHEBI:83833"/>
        <dbReference type="ChEBI" id="CHEBI:83834"/>
        <dbReference type="EC" id="5.2.1.8"/>
    </reaction>
</comment>
<comment type="subcellular location">
    <subcellularLocation>
        <location evidence="1">Periplasm</location>
    </subcellularLocation>
    <text evidence="1">Is capable of associating with the outer membrane.</text>
</comment>
<comment type="domain">
    <text evidence="1">The PPIase activity resides only in the second parvulin domain. The N-terminal region and the C-terminal tail are necessary and sufficient for the chaperone activity of SurA. The PPIase activity is dispensable for SurA to function as a chaperone. The N-terminal region and the C-terminal tail are also required for porin recognition.</text>
</comment>
<name>SURA_SALCH</name>
<dbReference type="EC" id="5.2.1.8" evidence="1"/>
<dbReference type="EMBL" id="AE017220">
    <property type="protein sequence ID" value="AAX63993.1"/>
    <property type="molecule type" value="Genomic_DNA"/>
</dbReference>
<dbReference type="RefSeq" id="WP_011264182.1">
    <property type="nucleotide sequence ID" value="NC_006905.1"/>
</dbReference>
<dbReference type="SMR" id="Q57TG8"/>
<dbReference type="KEGG" id="sec:SCH_0087"/>
<dbReference type="HOGENOM" id="CLU_034646_11_0_6"/>
<dbReference type="Proteomes" id="UP000000538">
    <property type="component" value="Chromosome"/>
</dbReference>
<dbReference type="GO" id="GO:0030288">
    <property type="term" value="C:outer membrane-bounded periplasmic space"/>
    <property type="evidence" value="ECO:0007669"/>
    <property type="project" value="InterPro"/>
</dbReference>
<dbReference type="GO" id="GO:0042277">
    <property type="term" value="F:peptide binding"/>
    <property type="evidence" value="ECO:0007669"/>
    <property type="project" value="InterPro"/>
</dbReference>
<dbReference type="GO" id="GO:0003755">
    <property type="term" value="F:peptidyl-prolyl cis-trans isomerase activity"/>
    <property type="evidence" value="ECO:0007669"/>
    <property type="project" value="UniProtKB-UniRule"/>
</dbReference>
<dbReference type="GO" id="GO:0051082">
    <property type="term" value="F:unfolded protein binding"/>
    <property type="evidence" value="ECO:0007669"/>
    <property type="project" value="UniProtKB-UniRule"/>
</dbReference>
<dbReference type="GO" id="GO:0043165">
    <property type="term" value="P:Gram-negative-bacterium-type cell outer membrane assembly"/>
    <property type="evidence" value="ECO:0007669"/>
    <property type="project" value="InterPro"/>
</dbReference>
<dbReference type="GO" id="GO:0006457">
    <property type="term" value="P:protein folding"/>
    <property type="evidence" value="ECO:0007669"/>
    <property type="project" value="UniProtKB-UniRule"/>
</dbReference>
<dbReference type="GO" id="GO:0050821">
    <property type="term" value="P:protein stabilization"/>
    <property type="evidence" value="ECO:0007669"/>
    <property type="project" value="InterPro"/>
</dbReference>
<dbReference type="FunFam" id="1.10.4030.10:FF:000002">
    <property type="entry name" value="Chaperone SurA"/>
    <property type="match status" value="1"/>
</dbReference>
<dbReference type="FunFam" id="3.10.50.40:FF:000007">
    <property type="entry name" value="Chaperone SurA"/>
    <property type="match status" value="1"/>
</dbReference>
<dbReference type="Gene3D" id="3.10.50.40">
    <property type="match status" value="2"/>
</dbReference>
<dbReference type="Gene3D" id="1.10.4030.10">
    <property type="entry name" value="Porin chaperone SurA, peptide-binding domain"/>
    <property type="match status" value="2"/>
</dbReference>
<dbReference type="HAMAP" id="MF_01183">
    <property type="entry name" value="Chaperone_SurA"/>
    <property type="match status" value="1"/>
</dbReference>
<dbReference type="InterPro" id="IPR050280">
    <property type="entry name" value="OMP_Chaperone_SurA"/>
</dbReference>
<dbReference type="InterPro" id="IPR046357">
    <property type="entry name" value="PPIase_dom_sf"/>
</dbReference>
<dbReference type="InterPro" id="IPR000297">
    <property type="entry name" value="PPIase_PpiC"/>
</dbReference>
<dbReference type="InterPro" id="IPR023058">
    <property type="entry name" value="PPIase_PpiC_CS"/>
</dbReference>
<dbReference type="InterPro" id="IPR023034">
    <property type="entry name" value="PPIase_SurA"/>
</dbReference>
<dbReference type="InterPro" id="IPR015391">
    <property type="entry name" value="SurA_N"/>
</dbReference>
<dbReference type="InterPro" id="IPR027304">
    <property type="entry name" value="Trigger_fact/SurA_dom_sf"/>
</dbReference>
<dbReference type="NCBIfam" id="NF008038">
    <property type="entry name" value="PRK10770.1"/>
    <property type="match status" value="1"/>
</dbReference>
<dbReference type="PANTHER" id="PTHR47637">
    <property type="entry name" value="CHAPERONE SURA"/>
    <property type="match status" value="1"/>
</dbReference>
<dbReference type="PANTHER" id="PTHR47637:SF1">
    <property type="entry name" value="CHAPERONE SURA"/>
    <property type="match status" value="1"/>
</dbReference>
<dbReference type="Pfam" id="PF00639">
    <property type="entry name" value="Rotamase"/>
    <property type="match status" value="1"/>
</dbReference>
<dbReference type="Pfam" id="PF13616">
    <property type="entry name" value="Rotamase_3"/>
    <property type="match status" value="1"/>
</dbReference>
<dbReference type="Pfam" id="PF09312">
    <property type="entry name" value="SurA_N"/>
    <property type="match status" value="1"/>
</dbReference>
<dbReference type="SUPFAM" id="SSF54534">
    <property type="entry name" value="FKBP-like"/>
    <property type="match status" value="2"/>
</dbReference>
<dbReference type="SUPFAM" id="SSF109998">
    <property type="entry name" value="Triger factor/SurA peptide-binding domain-like"/>
    <property type="match status" value="1"/>
</dbReference>
<dbReference type="PROSITE" id="PS01096">
    <property type="entry name" value="PPIC_PPIASE_1"/>
    <property type="match status" value="2"/>
</dbReference>
<dbReference type="PROSITE" id="PS50198">
    <property type="entry name" value="PPIC_PPIASE_2"/>
    <property type="match status" value="2"/>
</dbReference>
<protein>
    <recommendedName>
        <fullName evidence="1">Chaperone SurA</fullName>
    </recommendedName>
    <alternativeName>
        <fullName evidence="1">Peptidyl-prolyl cis-trans isomerase SurA</fullName>
        <shortName evidence="1">PPIase SurA</shortName>
        <ecNumber evidence="1">5.2.1.8</ecNumber>
    </alternativeName>
    <alternativeName>
        <fullName evidence="1">Rotamase SurA</fullName>
    </alternativeName>
</protein>
<evidence type="ECO:0000255" key="1">
    <source>
        <dbReference type="HAMAP-Rule" id="MF_01183"/>
    </source>
</evidence>
<keyword id="KW-0143">Chaperone</keyword>
<keyword id="KW-0413">Isomerase</keyword>
<keyword id="KW-0574">Periplasm</keyword>
<keyword id="KW-0677">Repeat</keyword>
<keyword id="KW-0697">Rotamase</keyword>
<keyword id="KW-0732">Signal</keyword>
<gene>
    <name evidence="1" type="primary">surA</name>
    <name type="ordered locus">SCH_0087</name>
</gene>
<sequence>MKNWKTLLLGIAMIANTSFAAPQVVDKVAAIVNNGVVLESDVDGLMQSVKLNAGQAGQQLPDDATLRHQILERLIMDQIILQMGQKMGVKITDEQLDQAIANIAKQNNMTMDQMRSRLAYDGLNYSTYRNQIRKEMIISEVRNNEVRRRITVLPQEVDALAKQIGTQNDASTELNLRHILIALPENPTSEQVNDAQRQAESIVEEARNGADFGKLAITYSADQQALKGGQMGWGRIQELPGIFAQALSTAKKGDIVGPIRSGVGFHILKVNDLRGQSQSISVTEVHARHILLKPSPIMNDQQARLKLEEIAADIKSGKTTFAAAAKEYSQDPGSANQGGDLGWATPDIFDPAFRDALTKLHKGQISAPVHSSFGWHLIELLDTRKVDKTDAAQKDRAYRMLMNRKFSEEAATWMQEQRASAYVKILSN</sequence>
<organism>
    <name type="scientific">Salmonella choleraesuis (strain SC-B67)</name>
    <dbReference type="NCBI Taxonomy" id="321314"/>
    <lineage>
        <taxon>Bacteria</taxon>
        <taxon>Pseudomonadati</taxon>
        <taxon>Pseudomonadota</taxon>
        <taxon>Gammaproteobacteria</taxon>
        <taxon>Enterobacterales</taxon>
        <taxon>Enterobacteriaceae</taxon>
        <taxon>Salmonella</taxon>
    </lineage>
</organism>